<keyword id="KW-0687">Ribonucleoprotein</keyword>
<keyword id="KW-0689">Ribosomal protein</keyword>
<keyword id="KW-0694">RNA-binding</keyword>
<keyword id="KW-0699">rRNA-binding</keyword>
<dbReference type="EMBL" id="CP000947">
    <property type="protein sequence ID" value="ACA31761.1"/>
    <property type="molecule type" value="Genomic_DNA"/>
</dbReference>
<dbReference type="RefSeq" id="WP_011608228.1">
    <property type="nucleotide sequence ID" value="NC_010519.1"/>
</dbReference>
<dbReference type="SMR" id="B0UX27"/>
<dbReference type="STRING" id="228400.HSM_1966"/>
<dbReference type="GeneID" id="31488277"/>
<dbReference type="KEGG" id="hsm:HSM_1966"/>
<dbReference type="HOGENOM" id="CLU_139869_0_1_6"/>
<dbReference type="GO" id="GO:0005737">
    <property type="term" value="C:cytoplasm"/>
    <property type="evidence" value="ECO:0007669"/>
    <property type="project" value="UniProtKB-ARBA"/>
</dbReference>
<dbReference type="GO" id="GO:0015935">
    <property type="term" value="C:small ribosomal subunit"/>
    <property type="evidence" value="ECO:0007669"/>
    <property type="project" value="TreeGrafter"/>
</dbReference>
<dbReference type="GO" id="GO:0019843">
    <property type="term" value="F:rRNA binding"/>
    <property type="evidence" value="ECO:0007669"/>
    <property type="project" value="UniProtKB-UniRule"/>
</dbReference>
<dbReference type="GO" id="GO:0003735">
    <property type="term" value="F:structural constituent of ribosome"/>
    <property type="evidence" value="ECO:0007669"/>
    <property type="project" value="InterPro"/>
</dbReference>
<dbReference type="GO" id="GO:0006412">
    <property type="term" value="P:translation"/>
    <property type="evidence" value="ECO:0007669"/>
    <property type="project" value="UniProtKB-UniRule"/>
</dbReference>
<dbReference type="FunFam" id="1.10.287.1480:FF:000001">
    <property type="entry name" value="30S ribosomal protein S14"/>
    <property type="match status" value="1"/>
</dbReference>
<dbReference type="Gene3D" id="1.10.287.1480">
    <property type="match status" value="1"/>
</dbReference>
<dbReference type="HAMAP" id="MF_00537">
    <property type="entry name" value="Ribosomal_uS14_1"/>
    <property type="match status" value="1"/>
</dbReference>
<dbReference type="InterPro" id="IPR001209">
    <property type="entry name" value="Ribosomal_uS14"/>
</dbReference>
<dbReference type="InterPro" id="IPR023036">
    <property type="entry name" value="Ribosomal_uS14_bac/plastid"/>
</dbReference>
<dbReference type="InterPro" id="IPR018271">
    <property type="entry name" value="Ribosomal_uS14_CS"/>
</dbReference>
<dbReference type="NCBIfam" id="NF006477">
    <property type="entry name" value="PRK08881.1"/>
    <property type="match status" value="1"/>
</dbReference>
<dbReference type="PANTHER" id="PTHR19836">
    <property type="entry name" value="30S RIBOSOMAL PROTEIN S14"/>
    <property type="match status" value="1"/>
</dbReference>
<dbReference type="PANTHER" id="PTHR19836:SF19">
    <property type="entry name" value="SMALL RIBOSOMAL SUBUNIT PROTEIN US14M"/>
    <property type="match status" value="1"/>
</dbReference>
<dbReference type="Pfam" id="PF00253">
    <property type="entry name" value="Ribosomal_S14"/>
    <property type="match status" value="1"/>
</dbReference>
<dbReference type="SUPFAM" id="SSF57716">
    <property type="entry name" value="Glucocorticoid receptor-like (DNA-binding domain)"/>
    <property type="match status" value="1"/>
</dbReference>
<dbReference type="PROSITE" id="PS00527">
    <property type="entry name" value="RIBOSOMAL_S14"/>
    <property type="match status" value="1"/>
</dbReference>
<proteinExistence type="inferred from homology"/>
<accession>B0UX27</accession>
<sequence>MAKQSMIARDVKRAKLADKFYEKREELKKVISDVNTSDEERWAAVLKLQTLPRDSSPVRQRNRCRQTGRPHGVLRKFGLSRIKVREAAMRGEIPGLKKASW</sequence>
<protein>
    <recommendedName>
        <fullName evidence="1">Small ribosomal subunit protein uS14</fullName>
    </recommendedName>
    <alternativeName>
        <fullName evidence="2">30S ribosomal protein S14</fullName>
    </alternativeName>
</protein>
<organism>
    <name type="scientific">Histophilus somni (strain 2336)</name>
    <name type="common">Haemophilus somnus</name>
    <dbReference type="NCBI Taxonomy" id="228400"/>
    <lineage>
        <taxon>Bacteria</taxon>
        <taxon>Pseudomonadati</taxon>
        <taxon>Pseudomonadota</taxon>
        <taxon>Gammaproteobacteria</taxon>
        <taxon>Pasteurellales</taxon>
        <taxon>Pasteurellaceae</taxon>
        <taxon>Histophilus</taxon>
    </lineage>
</organism>
<comment type="function">
    <text evidence="1">Binds 16S rRNA, required for the assembly of 30S particles and may also be responsible for determining the conformation of the 16S rRNA at the A site.</text>
</comment>
<comment type="subunit">
    <text evidence="1">Part of the 30S ribosomal subunit. Contacts proteins S3 and S10.</text>
</comment>
<comment type="similarity">
    <text evidence="1">Belongs to the universal ribosomal protein uS14 family.</text>
</comment>
<feature type="chain" id="PRO_1000128418" description="Small ribosomal subunit protein uS14">
    <location>
        <begin position="1"/>
        <end position="101"/>
    </location>
</feature>
<gene>
    <name evidence="1" type="primary">rpsN</name>
    <name type="ordered locus">HSM_1966</name>
</gene>
<evidence type="ECO:0000255" key="1">
    <source>
        <dbReference type="HAMAP-Rule" id="MF_00537"/>
    </source>
</evidence>
<evidence type="ECO:0000305" key="2"/>
<name>RS14_HISS2</name>
<reference key="1">
    <citation type="submission" date="2008-02" db="EMBL/GenBank/DDBJ databases">
        <title>Complete sequence of Haemophilus somnus 2336.</title>
        <authorList>
            <consortium name="US DOE Joint Genome Institute"/>
            <person name="Siddaramappa S."/>
            <person name="Duncan A.J."/>
            <person name="Challacombe J.F."/>
            <person name="Rainey D."/>
            <person name="Gillaspy A.F."/>
            <person name="Carson M."/>
            <person name="Gipson J."/>
            <person name="Gipson M."/>
            <person name="Bruce D."/>
            <person name="Detter J.C."/>
            <person name="Han C.S."/>
            <person name="Land M."/>
            <person name="Tapia R."/>
            <person name="Thompson L.S."/>
            <person name="Orvis J."/>
            <person name="Zaitshik J."/>
            <person name="Barnes G."/>
            <person name="Brettin T.S."/>
            <person name="Dyer D.W."/>
            <person name="Inzana T.J."/>
        </authorList>
    </citation>
    <scope>NUCLEOTIDE SEQUENCE [LARGE SCALE GENOMIC DNA]</scope>
    <source>
        <strain>2336</strain>
    </source>
</reference>